<protein>
    <recommendedName>
        <fullName evidence="1">Bifunctional uridylyltransferase/uridylyl-removing enzyme</fullName>
        <shortName evidence="1">UTase/UR</shortName>
    </recommendedName>
    <alternativeName>
        <fullName evidence="1">Bifunctional [protein-PII] modification enzyme</fullName>
    </alternativeName>
    <alternativeName>
        <fullName evidence="1">Bifunctional nitrogen sensor protein</fullName>
    </alternativeName>
    <domain>
        <recommendedName>
            <fullName evidence="1">[Protein-PII] uridylyltransferase</fullName>
            <shortName evidence="1">PII uridylyltransferase</shortName>
            <shortName evidence="1">UTase</shortName>
            <ecNumber evidence="1">2.7.7.59</ecNumber>
        </recommendedName>
    </domain>
    <domain>
        <recommendedName>
            <fullName evidence="1">[Protein-PII]-UMP uridylyl-removing enzyme</fullName>
            <shortName evidence="1">UR</shortName>
            <ecNumber evidence="1">3.1.4.-</ecNumber>
        </recommendedName>
    </domain>
</protein>
<reference key="1">
    <citation type="submission" date="2009-02" db="EMBL/GenBank/DDBJ databases">
        <title>Vibrio splendidus str. LGP32 complete genome.</title>
        <authorList>
            <person name="Mazel D."/>
            <person name="Le Roux F."/>
        </authorList>
    </citation>
    <scope>NUCLEOTIDE SEQUENCE [LARGE SCALE GENOMIC DNA]</scope>
    <source>
        <strain>LGP32</strain>
    </source>
</reference>
<proteinExistence type="inferred from homology"/>
<comment type="function">
    <text evidence="1">Modifies, by uridylylation and deuridylylation, the PII regulatory proteins (GlnB and homologs), in response to the nitrogen status of the cell that GlnD senses through the glutamine level. Under low glutamine levels, catalyzes the conversion of the PII proteins and UTP to PII-UMP and PPi, while under higher glutamine levels, GlnD hydrolyzes PII-UMP to PII and UMP (deuridylylation). Thus, controls uridylylation state and activity of the PII proteins, and plays an important role in the regulation of nitrogen assimilation and metabolism.</text>
</comment>
<comment type="catalytic activity">
    <reaction evidence="1">
        <text>[protein-PII]-L-tyrosine + UTP = [protein-PII]-uridylyl-L-tyrosine + diphosphate</text>
        <dbReference type="Rhea" id="RHEA:13673"/>
        <dbReference type="Rhea" id="RHEA-COMP:12147"/>
        <dbReference type="Rhea" id="RHEA-COMP:12148"/>
        <dbReference type="ChEBI" id="CHEBI:33019"/>
        <dbReference type="ChEBI" id="CHEBI:46398"/>
        <dbReference type="ChEBI" id="CHEBI:46858"/>
        <dbReference type="ChEBI" id="CHEBI:90602"/>
        <dbReference type="EC" id="2.7.7.59"/>
    </reaction>
</comment>
<comment type="catalytic activity">
    <reaction evidence="1">
        <text>[protein-PII]-uridylyl-L-tyrosine + H2O = [protein-PII]-L-tyrosine + UMP + H(+)</text>
        <dbReference type="Rhea" id="RHEA:48600"/>
        <dbReference type="Rhea" id="RHEA-COMP:12147"/>
        <dbReference type="Rhea" id="RHEA-COMP:12148"/>
        <dbReference type="ChEBI" id="CHEBI:15377"/>
        <dbReference type="ChEBI" id="CHEBI:15378"/>
        <dbReference type="ChEBI" id="CHEBI:46858"/>
        <dbReference type="ChEBI" id="CHEBI:57865"/>
        <dbReference type="ChEBI" id="CHEBI:90602"/>
    </reaction>
</comment>
<comment type="cofactor">
    <cofactor evidence="1">
        <name>Mg(2+)</name>
        <dbReference type="ChEBI" id="CHEBI:18420"/>
    </cofactor>
</comment>
<comment type="activity regulation">
    <text evidence="1">Uridylyltransferase (UTase) activity is inhibited by glutamine, while glutamine activates uridylyl-removing (UR) activity.</text>
</comment>
<comment type="domain">
    <text evidence="1">Has four distinct domains: an N-terminal nucleotidyltransferase (NT) domain responsible for UTase activity, a central HD domain that encodes UR activity, and two C-terminal ACT domains that seem to have a role in glutamine sensing.</text>
</comment>
<comment type="similarity">
    <text evidence="1">Belongs to the GlnD family.</text>
</comment>
<keyword id="KW-0378">Hydrolase</keyword>
<keyword id="KW-0460">Magnesium</keyword>
<keyword id="KW-0511">Multifunctional enzyme</keyword>
<keyword id="KW-0548">Nucleotidyltransferase</keyword>
<keyword id="KW-0677">Repeat</keyword>
<keyword id="KW-0808">Transferase</keyword>
<dbReference type="EC" id="2.7.7.59" evidence="1"/>
<dbReference type="EC" id="3.1.4.-" evidence="1"/>
<dbReference type="EMBL" id="FM954972">
    <property type="protein sequence ID" value="CAV19516.1"/>
    <property type="molecule type" value="Genomic_DNA"/>
</dbReference>
<dbReference type="SMR" id="B7VIS0"/>
<dbReference type="STRING" id="575788.VS_2355"/>
<dbReference type="KEGG" id="vsp:VS_2355"/>
<dbReference type="PATRIC" id="fig|575788.5.peg.3618"/>
<dbReference type="eggNOG" id="COG2844">
    <property type="taxonomic scope" value="Bacteria"/>
</dbReference>
<dbReference type="HOGENOM" id="CLU_012833_0_0_6"/>
<dbReference type="Proteomes" id="UP000009100">
    <property type="component" value="Chromosome 1"/>
</dbReference>
<dbReference type="GO" id="GO:0008773">
    <property type="term" value="F:[protein-PII] uridylyltransferase activity"/>
    <property type="evidence" value="ECO:0007669"/>
    <property type="project" value="UniProtKB-UniRule"/>
</dbReference>
<dbReference type="GO" id="GO:0008081">
    <property type="term" value="F:phosphoric diester hydrolase activity"/>
    <property type="evidence" value="ECO:0007669"/>
    <property type="project" value="UniProtKB-UniRule"/>
</dbReference>
<dbReference type="GO" id="GO:0006808">
    <property type="term" value="P:regulation of nitrogen utilization"/>
    <property type="evidence" value="ECO:0007669"/>
    <property type="project" value="UniProtKB-UniRule"/>
</dbReference>
<dbReference type="CDD" id="cd04899">
    <property type="entry name" value="ACT_ACR-UUR-like_2"/>
    <property type="match status" value="1"/>
</dbReference>
<dbReference type="CDD" id="cd04900">
    <property type="entry name" value="ACT_UUR-like_1"/>
    <property type="match status" value="1"/>
</dbReference>
<dbReference type="CDD" id="cd00077">
    <property type="entry name" value="HDc"/>
    <property type="match status" value="1"/>
</dbReference>
<dbReference type="CDD" id="cd05401">
    <property type="entry name" value="NT_GlnE_GlnD_like"/>
    <property type="match status" value="1"/>
</dbReference>
<dbReference type="Gene3D" id="3.30.460.10">
    <property type="entry name" value="Beta Polymerase, domain 2"/>
    <property type="match status" value="1"/>
</dbReference>
<dbReference type="Gene3D" id="1.10.3210.10">
    <property type="entry name" value="Hypothetical protein af1432"/>
    <property type="match status" value="1"/>
</dbReference>
<dbReference type="HAMAP" id="MF_00277">
    <property type="entry name" value="PII_uridylyl_transf"/>
    <property type="match status" value="1"/>
</dbReference>
<dbReference type="InterPro" id="IPR045865">
    <property type="entry name" value="ACT-like_dom_sf"/>
</dbReference>
<dbReference type="InterPro" id="IPR002912">
    <property type="entry name" value="ACT_dom"/>
</dbReference>
<dbReference type="InterPro" id="IPR003607">
    <property type="entry name" value="HD/PDEase_dom"/>
</dbReference>
<dbReference type="InterPro" id="IPR006674">
    <property type="entry name" value="HD_domain"/>
</dbReference>
<dbReference type="InterPro" id="IPR043519">
    <property type="entry name" value="NT_sf"/>
</dbReference>
<dbReference type="InterPro" id="IPR013546">
    <property type="entry name" value="PII_UdlTrfase/GS_AdlTrfase"/>
</dbReference>
<dbReference type="InterPro" id="IPR002934">
    <property type="entry name" value="Polymerase_NTP_transf_dom"/>
</dbReference>
<dbReference type="InterPro" id="IPR010043">
    <property type="entry name" value="UTase/UR"/>
</dbReference>
<dbReference type="NCBIfam" id="NF002487">
    <property type="entry name" value="PRK01759.1"/>
    <property type="match status" value="1"/>
</dbReference>
<dbReference type="NCBIfam" id="NF003448">
    <property type="entry name" value="PRK05007.1"/>
    <property type="match status" value="1"/>
</dbReference>
<dbReference type="NCBIfam" id="TIGR01693">
    <property type="entry name" value="UTase_glnD"/>
    <property type="match status" value="1"/>
</dbReference>
<dbReference type="PANTHER" id="PTHR47320">
    <property type="entry name" value="BIFUNCTIONAL URIDYLYLTRANSFERASE/URIDYLYL-REMOVING ENZYME"/>
    <property type="match status" value="1"/>
</dbReference>
<dbReference type="PANTHER" id="PTHR47320:SF1">
    <property type="entry name" value="BIFUNCTIONAL URIDYLYLTRANSFERASE_URIDYLYL-REMOVING ENZYME"/>
    <property type="match status" value="1"/>
</dbReference>
<dbReference type="Pfam" id="PF01842">
    <property type="entry name" value="ACT"/>
    <property type="match status" value="1"/>
</dbReference>
<dbReference type="Pfam" id="PF08335">
    <property type="entry name" value="GlnD_UR_UTase"/>
    <property type="match status" value="1"/>
</dbReference>
<dbReference type="Pfam" id="PF01966">
    <property type="entry name" value="HD"/>
    <property type="match status" value="1"/>
</dbReference>
<dbReference type="Pfam" id="PF01909">
    <property type="entry name" value="NTP_transf_2"/>
    <property type="match status" value="1"/>
</dbReference>
<dbReference type="PIRSF" id="PIRSF006288">
    <property type="entry name" value="PII_uridyltransf"/>
    <property type="match status" value="1"/>
</dbReference>
<dbReference type="SMART" id="SM00471">
    <property type="entry name" value="HDc"/>
    <property type="match status" value="1"/>
</dbReference>
<dbReference type="SUPFAM" id="SSF55021">
    <property type="entry name" value="ACT-like"/>
    <property type="match status" value="2"/>
</dbReference>
<dbReference type="SUPFAM" id="SSF109604">
    <property type="entry name" value="HD-domain/PDEase-like"/>
    <property type="match status" value="1"/>
</dbReference>
<dbReference type="SUPFAM" id="SSF81301">
    <property type="entry name" value="Nucleotidyltransferase"/>
    <property type="match status" value="1"/>
</dbReference>
<dbReference type="SUPFAM" id="SSF81593">
    <property type="entry name" value="Nucleotidyltransferase substrate binding subunit/domain"/>
    <property type="match status" value="1"/>
</dbReference>
<dbReference type="PROSITE" id="PS51671">
    <property type="entry name" value="ACT"/>
    <property type="match status" value="2"/>
</dbReference>
<dbReference type="PROSITE" id="PS51831">
    <property type="entry name" value="HD"/>
    <property type="match status" value="1"/>
</dbReference>
<accession>B7VIS0</accession>
<sequence length="873" mass="100638">MPYQCPITFNDEQLEICELKNQLEIFTQYQKSEFLNHHPVTDLVLLRSEYMDLLLNRLWEHFGFSKLPHIALVAVGGYGRGELHPLSDIDILIVSQRTLPSALGEKVSQFITLLWDLKLEVGHAVRTIAECIEIGSDDLTVATNLQESRLLCGSEDTFQELKLKIHSDSFWPSETFYKAKIQEQRERHARYHDTTYNLEPDIKSTPGGLRDIHTLSWVARRHFGATSLLEMSKYGFLTDAEYRELVECQDFLWRVRFALHIELRRYDNRLTFAHQAQVAEHLGYTGEGNRGVEMMMKEFYRTLRRVAELNKMLLKLFDQAIINGGQTQEAEILDNDFQRRGSLIEARKPALFQARPETILDMFIHIANDSTIEGVSPPTLRQLRTARRRLNRFLHTIPEARDKFMDLVRHPNALHKAFSLMHKLGVLSAYLPQWSQIVGQMQFDLFHVYTVDEHSIRLLKHINRFSQVENHDKHPICCEVYPRVQKKELLILAAIFHDIGKGRGGDHSEIGAVEAYSFCIEHGLSKPEAKQVAWLVQNHLLMSVTAQRRDIYDPDVITEFAKKVRDEESLELLVCLTVADICATNPELWNSWKRTLLAELFHSTQRALRRGLENPVDVRDRIRHNQQMASALLRKEGFSAREIEVLWQRFKADYFLRHTHTQIAWHCEHLLRLEDPSQPLVLISKKATRGGTEVFVYCKDQAALFATVVAELDRRNFNVHDAQVMVSKDGHVLDTFIVLDQHGEAIDEARHKAVAKHLTHVLADGRPTKIKTRRTPRNLQHFKVKTRVEFLPTKSKKRTLMELRALDTPGLLAQVGATFAELDINLHGAKITTIGERAEDLFILTSDAGGRLSEEQEQALRERLTEHVSELAP</sequence>
<gene>
    <name evidence="1" type="primary">glnD</name>
    <name type="ordered locus">VS_2355</name>
</gene>
<name>GLND_VIBA3</name>
<feature type="chain" id="PRO_1000132531" description="Bifunctional uridylyltransferase/uridylyl-removing enzyme">
    <location>
        <begin position="1"/>
        <end position="873"/>
    </location>
</feature>
<feature type="domain" description="HD" evidence="2">
    <location>
        <begin position="451"/>
        <end position="573"/>
    </location>
</feature>
<feature type="domain" description="ACT 1" evidence="1">
    <location>
        <begin position="693"/>
        <end position="777"/>
    </location>
</feature>
<feature type="domain" description="ACT 2" evidence="1">
    <location>
        <begin position="800"/>
        <end position="873"/>
    </location>
</feature>
<feature type="region of interest" description="Uridylyltransferase">
    <location>
        <begin position="1"/>
        <end position="332"/>
    </location>
</feature>
<feature type="region of interest" description="Uridylyl-removing">
    <location>
        <begin position="333"/>
        <end position="692"/>
    </location>
</feature>
<organism>
    <name type="scientific">Vibrio atlanticus (strain LGP32)</name>
    <name type="common">Vibrio splendidus (strain Mel32)</name>
    <dbReference type="NCBI Taxonomy" id="575788"/>
    <lineage>
        <taxon>Bacteria</taxon>
        <taxon>Pseudomonadati</taxon>
        <taxon>Pseudomonadota</taxon>
        <taxon>Gammaproteobacteria</taxon>
        <taxon>Vibrionales</taxon>
        <taxon>Vibrionaceae</taxon>
        <taxon>Vibrio</taxon>
    </lineage>
</organism>
<evidence type="ECO:0000255" key="1">
    <source>
        <dbReference type="HAMAP-Rule" id="MF_00277"/>
    </source>
</evidence>
<evidence type="ECO:0000255" key="2">
    <source>
        <dbReference type="PROSITE-ProRule" id="PRU01175"/>
    </source>
</evidence>